<feature type="chain" id="PRO_0000202019" description="Threonylcarbamoyl-AMP synthase">
    <location>
        <begin position="1"/>
        <end position="183"/>
    </location>
</feature>
<feature type="domain" description="YrdC-like" evidence="1">
    <location>
        <begin position="1"/>
        <end position="183"/>
    </location>
</feature>
<evidence type="ECO:0000255" key="1">
    <source>
        <dbReference type="HAMAP-Rule" id="MF_01852"/>
    </source>
</evidence>
<comment type="function">
    <text evidence="1">Required for the formation of a threonylcarbamoyl group on adenosine at position 37 (t(6)A37) in tRNAs that read codons beginning with adenine. Catalyzes the conversion of L-threonine, HCO(3)(-)/CO(2) and ATP to give threonylcarbamoyl-AMP (TC-AMP) as the acyladenylate intermediate, with the release of diphosphate.</text>
</comment>
<comment type="catalytic activity">
    <reaction evidence="1">
        <text>L-threonine + hydrogencarbonate + ATP = L-threonylcarbamoyladenylate + diphosphate + H2O</text>
        <dbReference type="Rhea" id="RHEA:36407"/>
        <dbReference type="ChEBI" id="CHEBI:15377"/>
        <dbReference type="ChEBI" id="CHEBI:17544"/>
        <dbReference type="ChEBI" id="CHEBI:30616"/>
        <dbReference type="ChEBI" id="CHEBI:33019"/>
        <dbReference type="ChEBI" id="CHEBI:57926"/>
        <dbReference type="ChEBI" id="CHEBI:73682"/>
        <dbReference type="EC" id="2.7.7.87"/>
    </reaction>
</comment>
<comment type="subcellular location">
    <subcellularLocation>
        <location evidence="1">Cytoplasm</location>
    </subcellularLocation>
</comment>
<comment type="similarity">
    <text evidence="1">Belongs to the SUA5 family. TsaC subfamily.</text>
</comment>
<reference key="1">
    <citation type="journal article" date="1995" name="Science">
        <title>Whole-genome random sequencing and assembly of Haemophilus influenzae Rd.</title>
        <authorList>
            <person name="Fleischmann R.D."/>
            <person name="Adams M.D."/>
            <person name="White O."/>
            <person name="Clayton R.A."/>
            <person name="Kirkness E.F."/>
            <person name="Kerlavage A.R."/>
            <person name="Bult C.J."/>
            <person name="Tomb J.-F."/>
            <person name="Dougherty B.A."/>
            <person name="Merrick J.M."/>
            <person name="McKenney K."/>
            <person name="Sutton G.G."/>
            <person name="FitzHugh W."/>
            <person name="Fields C.A."/>
            <person name="Gocayne J.D."/>
            <person name="Scott J.D."/>
            <person name="Shirley R."/>
            <person name="Liu L.-I."/>
            <person name="Glodek A."/>
            <person name="Kelley J.M."/>
            <person name="Weidman J.F."/>
            <person name="Phillips C.A."/>
            <person name="Spriggs T."/>
            <person name="Hedblom E."/>
            <person name="Cotton M.D."/>
            <person name="Utterback T.R."/>
            <person name="Hanna M.C."/>
            <person name="Nguyen D.T."/>
            <person name="Saudek D.M."/>
            <person name="Brandon R.C."/>
            <person name="Fine L.D."/>
            <person name="Fritchman J.L."/>
            <person name="Fuhrmann J.L."/>
            <person name="Geoghagen N.S.M."/>
            <person name="Gnehm C.L."/>
            <person name="McDonald L.A."/>
            <person name="Small K.V."/>
            <person name="Fraser C.M."/>
            <person name="Smith H.O."/>
            <person name="Venter J.C."/>
        </authorList>
    </citation>
    <scope>NUCLEOTIDE SEQUENCE [LARGE SCALE GENOMIC DNA]</scope>
    <source>
        <strain>ATCC 51907 / DSM 11121 / KW20 / Rd</strain>
    </source>
</reference>
<reference key="2">
    <citation type="journal article" date="2000" name="Electrophoresis">
        <title>Two-dimensional map of the proteome of Haemophilus influenzae.</title>
        <authorList>
            <person name="Langen H."/>
            <person name="Takacs B."/>
            <person name="Evers S."/>
            <person name="Berndt P."/>
            <person name="Lahm H.W."/>
            <person name="Wipf B."/>
            <person name="Gray C."/>
            <person name="Fountoulakis M."/>
        </authorList>
    </citation>
    <scope>IDENTIFICATION BY MASS SPECTROMETRY</scope>
    <source>
        <strain>ATCC 51907 / DSM 11121 / KW20 / Rd</strain>
    </source>
</reference>
<organism>
    <name type="scientific">Haemophilus influenzae (strain ATCC 51907 / DSM 11121 / KW20 / Rd)</name>
    <dbReference type="NCBI Taxonomy" id="71421"/>
    <lineage>
        <taxon>Bacteria</taxon>
        <taxon>Pseudomonadati</taxon>
        <taxon>Pseudomonadota</taxon>
        <taxon>Gammaproteobacteria</taxon>
        <taxon>Pasteurellales</taxon>
        <taxon>Pasteurellaceae</taxon>
        <taxon>Haemophilus</taxon>
    </lineage>
</organism>
<gene>
    <name evidence="1" type="primary">tsaC</name>
    <name type="synonym">rimN</name>
    <name type="ordered locus">HI_0656</name>
</gene>
<proteinExistence type="evidence at protein level"/>
<sequence>MNREQIADALRQNQVVAYPTEAVFGLGCNPQSESAVKKLLDLKQRPVEKGLILVAPSLDFFRPFVDFEQINDEQLSRLQGKYERPTTWIVPAKSTTPHFLTGKFDSIAIRLCDHPSVKALCELTGFALTSTSANLTGEPPCRTADEVRLQFGSDFPVLNEMVGRAHNPSEIRDLRTNQLFRQG</sequence>
<accession>P44807</accession>
<name>TSAC_HAEIN</name>
<protein>
    <recommendedName>
        <fullName evidence="1">Threonylcarbamoyl-AMP synthase</fullName>
        <shortName evidence="1">TC-AMP synthase</shortName>
        <ecNumber evidence="1">2.7.7.87</ecNumber>
    </recommendedName>
    <alternativeName>
        <fullName evidence="1">L-threonylcarbamoyladenylate synthase</fullName>
    </alternativeName>
    <alternativeName>
        <fullName evidence="1">t(6)A37 threonylcarbamoyladenosine biosynthesis protein TsaC</fullName>
    </alternativeName>
    <alternativeName>
        <fullName evidence="1">tRNA threonylcarbamoyladenosine biosynthesis protein TsaC</fullName>
    </alternativeName>
</protein>
<keyword id="KW-0067">ATP-binding</keyword>
<keyword id="KW-0963">Cytoplasm</keyword>
<keyword id="KW-0547">Nucleotide-binding</keyword>
<keyword id="KW-0548">Nucleotidyltransferase</keyword>
<keyword id="KW-1185">Reference proteome</keyword>
<keyword id="KW-0808">Transferase</keyword>
<keyword id="KW-0819">tRNA processing</keyword>
<dbReference type="EC" id="2.7.7.87" evidence="1"/>
<dbReference type="EMBL" id="L42023">
    <property type="protein sequence ID" value="AAC22315.1"/>
    <property type="molecule type" value="Genomic_DNA"/>
</dbReference>
<dbReference type="PIR" id="B64156">
    <property type="entry name" value="B64156"/>
</dbReference>
<dbReference type="RefSeq" id="NP_438816.1">
    <property type="nucleotide sequence ID" value="NC_000907.1"/>
</dbReference>
<dbReference type="SMR" id="P44807"/>
<dbReference type="STRING" id="71421.HI_0656"/>
<dbReference type="EnsemblBacteria" id="AAC22315">
    <property type="protein sequence ID" value="AAC22315"/>
    <property type="gene ID" value="HI_0656"/>
</dbReference>
<dbReference type="KEGG" id="hin:HI_0656"/>
<dbReference type="PATRIC" id="fig|71421.8.peg.685"/>
<dbReference type="eggNOG" id="COG0009">
    <property type="taxonomic scope" value="Bacteria"/>
</dbReference>
<dbReference type="HOGENOM" id="CLU_031397_6_0_6"/>
<dbReference type="OrthoDB" id="9814580at2"/>
<dbReference type="PhylomeDB" id="P44807"/>
<dbReference type="BioCyc" id="HINF71421:G1GJ1-691-MONOMER"/>
<dbReference type="Proteomes" id="UP000000579">
    <property type="component" value="Chromosome"/>
</dbReference>
<dbReference type="GO" id="GO:0005737">
    <property type="term" value="C:cytoplasm"/>
    <property type="evidence" value="ECO:0000318"/>
    <property type="project" value="GO_Central"/>
</dbReference>
<dbReference type="GO" id="GO:0005524">
    <property type="term" value="F:ATP binding"/>
    <property type="evidence" value="ECO:0007669"/>
    <property type="project" value="UniProtKB-UniRule"/>
</dbReference>
<dbReference type="GO" id="GO:0003725">
    <property type="term" value="F:double-stranded RNA binding"/>
    <property type="evidence" value="ECO:0007669"/>
    <property type="project" value="InterPro"/>
</dbReference>
<dbReference type="GO" id="GO:0061710">
    <property type="term" value="F:L-threonylcarbamoyladenylate synthase"/>
    <property type="evidence" value="ECO:0007669"/>
    <property type="project" value="UniProtKB-EC"/>
</dbReference>
<dbReference type="GO" id="GO:0016779">
    <property type="term" value="F:nucleotidyltransferase activity"/>
    <property type="evidence" value="ECO:0000318"/>
    <property type="project" value="GO_Central"/>
</dbReference>
<dbReference type="GO" id="GO:0000049">
    <property type="term" value="F:tRNA binding"/>
    <property type="evidence" value="ECO:0000318"/>
    <property type="project" value="GO_Central"/>
</dbReference>
<dbReference type="GO" id="GO:0006450">
    <property type="term" value="P:regulation of translational fidelity"/>
    <property type="evidence" value="ECO:0000318"/>
    <property type="project" value="GO_Central"/>
</dbReference>
<dbReference type="GO" id="GO:0002949">
    <property type="term" value="P:tRNA threonylcarbamoyladenosine modification"/>
    <property type="evidence" value="ECO:0007669"/>
    <property type="project" value="UniProtKB-UniRule"/>
</dbReference>
<dbReference type="FunFam" id="3.90.870.10:FF:000004">
    <property type="entry name" value="Threonylcarbamoyl-AMP synthase"/>
    <property type="match status" value="1"/>
</dbReference>
<dbReference type="Gene3D" id="3.90.870.10">
    <property type="entry name" value="DHBP synthase"/>
    <property type="match status" value="1"/>
</dbReference>
<dbReference type="HAMAP" id="MF_01852">
    <property type="entry name" value="TsaC"/>
    <property type="match status" value="1"/>
</dbReference>
<dbReference type="InterPro" id="IPR017945">
    <property type="entry name" value="DHBP_synth_RibB-like_a/b_dom"/>
</dbReference>
<dbReference type="InterPro" id="IPR006070">
    <property type="entry name" value="Sua5-like_dom"/>
</dbReference>
<dbReference type="InterPro" id="IPR023535">
    <property type="entry name" value="TC-AMP_synthase"/>
</dbReference>
<dbReference type="InterPro" id="IPR050156">
    <property type="entry name" value="TC-AMP_synthase_SUA5"/>
</dbReference>
<dbReference type="PANTHER" id="PTHR17490">
    <property type="entry name" value="SUA5"/>
    <property type="match status" value="1"/>
</dbReference>
<dbReference type="PANTHER" id="PTHR17490:SF18">
    <property type="entry name" value="THREONYLCARBAMOYL-AMP SYNTHASE"/>
    <property type="match status" value="1"/>
</dbReference>
<dbReference type="Pfam" id="PF01300">
    <property type="entry name" value="Sua5_yciO_yrdC"/>
    <property type="match status" value="1"/>
</dbReference>
<dbReference type="SUPFAM" id="SSF55821">
    <property type="entry name" value="YrdC/RibB"/>
    <property type="match status" value="1"/>
</dbReference>
<dbReference type="PROSITE" id="PS51163">
    <property type="entry name" value="YRDC"/>
    <property type="match status" value="1"/>
</dbReference>